<feature type="chain" id="PRO_1000012146" description="DNA repair protein RecO">
    <location>
        <begin position="1"/>
        <end position="249"/>
    </location>
</feature>
<dbReference type="EMBL" id="CP000529">
    <property type="protein sequence ID" value="ABM38358.1"/>
    <property type="molecule type" value="Genomic_DNA"/>
</dbReference>
<dbReference type="RefSeq" id="WP_011802430.1">
    <property type="nucleotide sequence ID" value="NC_008781.1"/>
</dbReference>
<dbReference type="SMR" id="A1VRT0"/>
<dbReference type="STRING" id="365044.Pnap_3059"/>
<dbReference type="KEGG" id="pna:Pnap_3059"/>
<dbReference type="eggNOG" id="COG1381">
    <property type="taxonomic scope" value="Bacteria"/>
</dbReference>
<dbReference type="HOGENOM" id="CLU_066645_0_0_4"/>
<dbReference type="OrthoDB" id="9804792at2"/>
<dbReference type="Proteomes" id="UP000000644">
    <property type="component" value="Chromosome"/>
</dbReference>
<dbReference type="GO" id="GO:0043590">
    <property type="term" value="C:bacterial nucleoid"/>
    <property type="evidence" value="ECO:0007669"/>
    <property type="project" value="TreeGrafter"/>
</dbReference>
<dbReference type="GO" id="GO:0006310">
    <property type="term" value="P:DNA recombination"/>
    <property type="evidence" value="ECO:0007669"/>
    <property type="project" value="UniProtKB-UniRule"/>
</dbReference>
<dbReference type="GO" id="GO:0006302">
    <property type="term" value="P:double-strand break repair"/>
    <property type="evidence" value="ECO:0007669"/>
    <property type="project" value="TreeGrafter"/>
</dbReference>
<dbReference type="Gene3D" id="2.40.50.140">
    <property type="entry name" value="Nucleic acid-binding proteins"/>
    <property type="match status" value="1"/>
</dbReference>
<dbReference type="Gene3D" id="1.20.1440.120">
    <property type="entry name" value="Recombination protein O, C-terminal domain"/>
    <property type="match status" value="1"/>
</dbReference>
<dbReference type="HAMAP" id="MF_00201">
    <property type="entry name" value="RecO"/>
    <property type="match status" value="1"/>
</dbReference>
<dbReference type="InterPro" id="IPR037278">
    <property type="entry name" value="ARFGAP/RecO"/>
</dbReference>
<dbReference type="InterPro" id="IPR022572">
    <property type="entry name" value="DNA_rep/recomb_RecO_N"/>
</dbReference>
<dbReference type="InterPro" id="IPR012340">
    <property type="entry name" value="NA-bd_OB-fold"/>
</dbReference>
<dbReference type="InterPro" id="IPR003717">
    <property type="entry name" value="RecO"/>
</dbReference>
<dbReference type="InterPro" id="IPR042242">
    <property type="entry name" value="RecO_C"/>
</dbReference>
<dbReference type="NCBIfam" id="TIGR00613">
    <property type="entry name" value="reco"/>
    <property type="match status" value="1"/>
</dbReference>
<dbReference type="PANTHER" id="PTHR33991">
    <property type="entry name" value="DNA REPAIR PROTEIN RECO"/>
    <property type="match status" value="1"/>
</dbReference>
<dbReference type="PANTHER" id="PTHR33991:SF1">
    <property type="entry name" value="DNA REPAIR PROTEIN RECO"/>
    <property type="match status" value="1"/>
</dbReference>
<dbReference type="Pfam" id="PF02565">
    <property type="entry name" value="RecO_C"/>
    <property type="match status" value="1"/>
</dbReference>
<dbReference type="Pfam" id="PF11967">
    <property type="entry name" value="RecO_N"/>
    <property type="match status" value="1"/>
</dbReference>
<dbReference type="SUPFAM" id="SSF57863">
    <property type="entry name" value="ArfGap/RecO-like zinc finger"/>
    <property type="match status" value="1"/>
</dbReference>
<dbReference type="SUPFAM" id="SSF50249">
    <property type="entry name" value="Nucleic acid-binding proteins"/>
    <property type="match status" value="1"/>
</dbReference>
<evidence type="ECO:0000255" key="1">
    <source>
        <dbReference type="HAMAP-Rule" id="MF_00201"/>
    </source>
</evidence>
<comment type="function">
    <text evidence="1">Involved in DNA repair and RecF pathway recombination.</text>
</comment>
<comment type="similarity">
    <text evidence="1">Belongs to the RecO family.</text>
</comment>
<protein>
    <recommendedName>
        <fullName evidence="1">DNA repair protein RecO</fullName>
    </recommendedName>
    <alternativeName>
        <fullName evidence="1">Recombination protein O</fullName>
    </alternativeName>
</protein>
<reference key="1">
    <citation type="journal article" date="2009" name="Environ. Microbiol.">
        <title>The genome of Polaromonas naphthalenivorans strain CJ2, isolated from coal tar-contaminated sediment, reveals physiological and metabolic versatility and evolution through extensive horizontal gene transfer.</title>
        <authorList>
            <person name="Yagi J.M."/>
            <person name="Sims D."/>
            <person name="Brettin T."/>
            <person name="Bruce D."/>
            <person name="Madsen E.L."/>
        </authorList>
    </citation>
    <scope>NUCLEOTIDE SEQUENCE [LARGE SCALE GENOMIC DNA]</scope>
    <source>
        <strain>CJ2</strain>
    </source>
</reference>
<name>RECO_POLNA</name>
<sequence>MASQRISNEPAYVLHRYDWSESSLILDVFTRHHGRVALVARGAKKPSSSFRPILLPLQPLHVAFGGDAEIRNLKSAEWQGGHVMPSGDALLSGYYLNELLMRLLARDDPHPLLFDAYAATVQLLASQNPDTLQLALRAFELRLLQGIGLLPRLDAETATLTPLAPHQRYVLVAEAGLRQAHDDDRFSLSGAQWQALQQALGGKSLFSDTLQACVACANELKIQLRALLHYHCGVRVLKTRQMMMDLQAL</sequence>
<accession>A1VRT0</accession>
<organism>
    <name type="scientific">Polaromonas naphthalenivorans (strain CJ2)</name>
    <dbReference type="NCBI Taxonomy" id="365044"/>
    <lineage>
        <taxon>Bacteria</taxon>
        <taxon>Pseudomonadati</taxon>
        <taxon>Pseudomonadota</taxon>
        <taxon>Betaproteobacteria</taxon>
        <taxon>Burkholderiales</taxon>
        <taxon>Comamonadaceae</taxon>
        <taxon>Polaromonas</taxon>
    </lineage>
</organism>
<proteinExistence type="inferred from homology"/>
<keyword id="KW-0227">DNA damage</keyword>
<keyword id="KW-0233">DNA recombination</keyword>
<keyword id="KW-0234">DNA repair</keyword>
<keyword id="KW-1185">Reference proteome</keyword>
<gene>
    <name evidence="1" type="primary">recO</name>
    <name type="ordered locus">Pnap_3059</name>
</gene>